<accession>P06617</accession>
<geneLocation type="plasmid">
    <name>pIAA1</name>
</geneLocation>
<proteinExistence type="evidence at protein level"/>
<name>TR2M_PSESS</name>
<sequence>MYDHFNSPSIDILYDYGPFLKKCEMTGGIGSYSAGTPTPRVAIVGAGISGLVAATELLRAGVKDVVLYESRDRIGGRVWSQVFDQTRPRYIAEMGAMRFPPSATGLFHYLKKFGISTSTTFPDPGVVDTELHYRGKRYHWPAGKKPPELFRRVYEGWQSLLSEGYLLEGGSLVAPLDITAMLKSGRLEEAAIAWQGWLNVFRDCSFYNAIVCIFTGRHPPGGDRWARPEDFELFGSLGIGSGGFLPVFQAGFTEILRMVINGYQSDQRLIPDGISSLAARLADQSFDGKALRDRVCFSRVGRISREAEKIIIQTEAGEQRVFDRVIVTSSNRAMQMIHCLTDSESFLSRDVARAVRETHLTGSSKLFILTRTKFWIKNKLPTTIQSDGLVRGVYCLDYQPDEPEGHGVVLLSYTWEDDAQKMLAMPDKKTRCQVLVDDLAAIHPTFASYLLPVDGDYERYVLHHDWLTDPHSAGAFKLNYPGEDVYSQRLFFQPMTANSPNKDTGLYLAGCSCSFAGGWIEGAVQTALNSACAVLRSTGGQLSKGNPLDCINASYRY</sequence>
<comment type="catalytic activity">
    <reaction evidence="1">
        <text>L-tryptophan + O2 = indole-3-acetamide + CO2 + H2O</text>
        <dbReference type="Rhea" id="RHEA:16165"/>
        <dbReference type="ChEBI" id="CHEBI:15377"/>
        <dbReference type="ChEBI" id="CHEBI:15379"/>
        <dbReference type="ChEBI" id="CHEBI:16031"/>
        <dbReference type="ChEBI" id="CHEBI:16526"/>
        <dbReference type="ChEBI" id="CHEBI:57912"/>
        <dbReference type="EC" id="1.13.12.3"/>
    </reaction>
</comment>
<comment type="cofactor">
    <cofactor evidence="1">
        <name>FMN</name>
        <dbReference type="ChEBI" id="CHEBI:58210"/>
    </cofactor>
    <text evidence="1">Binds 1 FMN per subunit.</text>
</comment>
<comment type="pathway">
    <text>Plant hormone metabolism; auxin biosynthesis.</text>
</comment>
<comment type="subunit">
    <text evidence="1">Monomer.</text>
</comment>
<comment type="similarity">
    <text evidence="2">Belongs to the tryptophan 2-monooxygenase family.</text>
</comment>
<reference key="1">
    <citation type="journal article" date="1985" name="Proc. Natl. Acad. Sci. U.S.A.">
        <title>Nucleotide sequences of the Pseudomonas savastanoi indoleacetic acid genes show homology with Agrobacterium tumefaciens T-DNA.</title>
        <authorList>
            <person name="Yamada T."/>
            <person name="Palm C.J."/>
            <person name="Brooks B."/>
            <person name="Kosuge T."/>
        </authorList>
    </citation>
    <scope>NUCLEOTIDE SEQUENCE [GENOMIC DNA]</scope>
    <source>
        <strain>EW2009</strain>
    </source>
</reference>
<reference key="2">
    <citation type="journal article" date="2013" name="Biochemistry">
        <title>Structure of the flavoprotein tryptophan 2-monooxygenase, a key enzyme in the formation of galls in plants.</title>
        <authorList>
            <person name="Gaweska H.M."/>
            <person name="Taylor A.B."/>
            <person name="Hart P.J."/>
            <person name="Fitzpatrick P.F."/>
        </authorList>
    </citation>
    <scope>X-RAY CRYSTALLOGRAPHY (1.95 ANGSTROMS) IN COMPLEX WITH FAD AND THE SUBSTRATE ANALOG INDOLE-3-ACETAMIDE</scope>
    <scope>CATALYTIC ACTIVITY</scope>
    <scope>COFACTOR</scope>
    <scope>SUBUNIT</scope>
    <scope>IDENTIFICATION BY MASS SPECTROMETRY</scope>
    <scope>MUTAGENESIS OF LYS-365 AND TRP-466</scope>
</reference>
<keyword id="KW-0002">3D-structure</keyword>
<keyword id="KW-0073">Auxin biosynthesis</keyword>
<keyword id="KW-0285">Flavoprotein</keyword>
<keyword id="KW-0288">FMN</keyword>
<keyword id="KW-0503">Monooxygenase</keyword>
<keyword id="KW-0560">Oxidoreductase</keyword>
<keyword id="KW-0614">Plasmid</keyword>
<evidence type="ECO:0000269" key="1">
    <source>
    </source>
</evidence>
<evidence type="ECO:0000305" key="2"/>
<evidence type="ECO:0007829" key="3">
    <source>
        <dbReference type="PDB" id="4IV9"/>
    </source>
</evidence>
<gene>
    <name type="primary">iaaM</name>
</gene>
<dbReference type="EC" id="1.13.12.3"/>
<dbReference type="EMBL" id="M11035">
    <property type="protein sequence ID" value="AAA25852.1"/>
    <property type="molecule type" value="Genomic_DNA"/>
</dbReference>
<dbReference type="PIR" id="A25493">
    <property type="entry name" value="A25493"/>
</dbReference>
<dbReference type="RefSeq" id="WP_002556046.1">
    <property type="nucleotide sequence ID" value="NZ_QUSH01000118.1"/>
</dbReference>
<dbReference type="PDB" id="4IV9">
    <property type="method" value="X-ray"/>
    <property type="resolution" value="1.95 A"/>
    <property type="chains" value="A/B=1-557"/>
</dbReference>
<dbReference type="PDBsum" id="4IV9"/>
<dbReference type="SMR" id="P06617"/>
<dbReference type="KEGG" id="ag:AAA25852"/>
<dbReference type="BioCyc" id="MetaCyc:MONOMER-7661"/>
<dbReference type="BRENDA" id="1.13.12.3">
    <property type="organism ID" value="5174"/>
</dbReference>
<dbReference type="SABIO-RK" id="P06617"/>
<dbReference type="STRENDA-DB" id="KJWIQY">
    <property type="experiment" value="Kinetic mechanism of tryptophan 2-monooxygenase with tryptophan"/>
</dbReference>
<dbReference type="STRENDA-DB" id="WZOV5O">
    <property type="experiment" value="Kinetic mechanism of tryptophan 2-monooxygenase with phenylalanine"/>
</dbReference>
<dbReference type="UniPathway" id="UPA00151"/>
<dbReference type="EvolutionaryTrace" id="P06617"/>
<dbReference type="GO" id="GO:0001716">
    <property type="term" value="F:L-amino-acid oxidase activity"/>
    <property type="evidence" value="ECO:0007669"/>
    <property type="project" value="TreeGrafter"/>
</dbReference>
<dbReference type="GO" id="GO:0050361">
    <property type="term" value="F:tryptophan 2-monooxygenase activity"/>
    <property type="evidence" value="ECO:0007669"/>
    <property type="project" value="UniProtKB-EC"/>
</dbReference>
<dbReference type="GO" id="GO:0009063">
    <property type="term" value="P:amino acid catabolic process"/>
    <property type="evidence" value="ECO:0007669"/>
    <property type="project" value="TreeGrafter"/>
</dbReference>
<dbReference type="GO" id="GO:0009851">
    <property type="term" value="P:auxin biosynthetic process"/>
    <property type="evidence" value="ECO:0007669"/>
    <property type="project" value="UniProtKB-UniPathway"/>
</dbReference>
<dbReference type="Gene3D" id="1.10.405.40">
    <property type="match status" value="1"/>
</dbReference>
<dbReference type="Gene3D" id="3.90.660.10">
    <property type="match status" value="1"/>
</dbReference>
<dbReference type="Gene3D" id="3.50.50.60">
    <property type="entry name" value="FAD/NAD(P)-binding domain"/>
    <property type="match status" value="1"/>
</dbReference>
<dbReference type="InterPro" id="IPR002937">
    <property type="entry name" value="Amino_oxidase"/>
</dbReference>
<dbReference type="InterPro" id="IPR036188">
    <property type="entry name" value="FAD/NAD-bd_sf"/>
</dbReference>
<dbReference type="InterPro" id="IPR050281">
    <property type="entry name" value="Flavin_monoamine_oxidase"/>
</dbReference>
<dbReference type="PANTHER" id="PTHR10742:SF342">
    <property type="entry name" value="AMINE OXIDASE"/>
    <property type="match status" value="1"/>
</dbReference>
<dbReference type="PANTHER" id="PTHR10742">
    <property type="entry name" value="FLAVIN MONOAMINE OXIDASE"/>
    <property type="match status" value="1"/>
</dbReference>
<dbReference type="Pfam" id="PF01593">
    <property type="entry name" value="Amino_oxidase"/>
    <property type="match status" value="1"/>
</dbReference>
<dbReference type="PRINTS" id="PR00419">
    <property type="entry name" value="ADXRDTASE"/>
</dbReference>
<dbReference type="SUPFAM" id="SSF54373">
    <property type="entry name" value="FAD-linked reductases, C-terminal domain"/>
    <property type="match status" value="1"/>
</dbReference>
<dbReference type="SUPFAM" id="SSF51905">
    <property type="entry name" value="FAD/NAD(P)-binding domain"/>
    <property type="match status" value="1"/>
</dbReference>
<organism>
    <name type="scientific">Pseudomonas savastanoi</name>
    <name type="common">Pseudomonas syringae pv. savastanoi</name>
    <dbReference type="NCBI Taxonomy" id="29438"/>
    <lineage>
        <taxon>Bacteria</taxon>
        <taxon>Pseudomonadati</taxon>
        <taxon>Pseudomonadota</taxon>
        <taxon>Gammaproteobacteria</taxon>
        <taxon>Pseudomonadales</taxon>
        <taxon>Pseudomonadaceae</taxon>
        <taxon>Pseudomonas</taxon>
    </lineage>
</organism>
<feature type="chain" id="PRO_0000065590" description="Tryptophan 2-monooxygenase">
    <location>
        <begin position="1"/>
        <end position="557"/>
    </location>
</feature>
<feature type="binding site">
    <location>
        <position position="49"/>
    </location>
    <ligand>
        <name>FMN</name>
        <dbReference type="ChEBI" id="CHEBI:58210"/>
    </ligand>
</feature>
<feature type="binding site">
    <location>
        <position position="69"/>
    </location>
    <ligand>
        <name>FMN</name>
        <dbReference type="ChEBI" id="CHEBI:58210"/>
    </ligand>
</feature>
<feature type="binding site">
    <location>
        <position position="71"/>
    </location>
    <ligand>
        <name>FMN</name>
        <dbReference type="ChEBI" id="CHEBI:58210"/>
    </ligand>
</feature>
<feature type="binding site">
    <location>
        <position position="77"/>
    </location>
    <ligand>
        <name>FMN</name>
        <dbReference type="ChEBI" id="CHEBI:58210"/>
    </ligand>
</feature>
<feature type="binding site">
    <location>
        <position position="98"/>
    </location>
    <ligand>
        <name>FMN</name>
        <dbReference type="ChEBI" id="CHEBI:58210"/>
    </ligand>
</feature>
<feature type="binding site">
    <location>
        <position position="98"/>
    </location>
    <ligand>
        <name>substrate</name>
    </ligand>
</feature>
<feature type="mutagenesis site" description="Abolishes catalytic activity." evidence="1">
    <original>K</original>
    <variation>M</variation>
    <location>
        <position position="365"/>
    </location>
</feature>
<feature type="mutagenesis site" description="Slightly decreases enzyme activity." evidence="1">
    <original>W</original>
    <variation>F</variation>
    <location>
        <position position="466"/>
    </location>
</feature>
<feature type="mutagenesis site" description="Abolishes flavin binding." evidence="1">
    <original>W</original>
    <variation>M</variation>
    <location>
        <position position="466"/>
    </location>
</feature>
<feature type="turn" evidence="3">
    <location>
        <begin position="10"/>
        <end position="12"/>
    </location>
</feature>
<feature type="helix" evidence="3">
    <location>
        <begin position="16"/>
        <end position="24"/>
    </location>
</feature>
<feature type="turn" evidence="3">
    <location>
        <begin position="25"/>
        <end position="27"/>
    </location>
</feature>
<feature type="strand" evidence="3">
    <location>
        <begin position="28"/>
        <end position="31"/>
    </location>
</feature>
<feature type="strand" evidence="3">
    <location>
        <begin position="41"/>
        <end position="44"/>
    </location>
</feature>
<feature type="helix" evidence="3">
    <location>
        <begin position="48"/>
        <end position="59"/>
    </location>
</feature>
<feature type="strand" evidence="3">
    <location>
        <begin position="65"/>
        <end position="68"/>
    </location>
</feature>
<feature type="strand" evidence="3">
    <location>
        <begin position="71"/>
        <end position="75"/>
    </location>
</feature>
<feature type="strand" evidence="3">
    <location>
        <begin position="80"/>
        <end position="83"/>
    </location>
</feature>
<feature type="strand" evidence="3">
    <location>
        <begin position="91"/>
        <end position="95"/>
    </location>
</feature>
<feature type="helix" evidence="3">
    <location>
        <begin position="104"/>
        <end position="113"/>
    </location>
</feature>
<feature type="strand" evidence="3">
    <location>
        <begin position="127"/>
        <end position="133"/>
    </location>
</feature>
<feature type="strand" evidence="3">
    <location>
        <begin position="136"/>
        <end position="140"/>
    </location>
</feature>
<feature type="helix" evidence="3">
    <location>
        <begin position="148"/>
        <end position="150"/>
    </location>
</feature>
<feature type="helix" evidence="3">
    <location>
        <begin position="151"/>
        <end position="163"/>
    </location>
</feature>
<feature type="helix" evidence="3">
    <location>
        <begin position="175"/>
        <end position="184"/>
    </location>
</feature>
<feature type="helix" evidence="3">
    <location>
        <begin position="187"/>
        <end position="201"/>
    </location>
</feature>
<feature type="helix" evidence="3">
    <location>
        <begin position="206"/>
        <end position="215"/>
    </location>
</feature>
<feature type="helix" evidence="3">
    <location>
        <begin position="229"/>
        <end position="237"/>
    </location>
</feature>
<feature type="strand" evidence="3">
    <location>
        <begin position="239"/>
        <end position="242"/>
    </location>
</feature>
<feature type="helix" evidence="3">
    <location>
        <begin position="245"/>
        <end position="247"/>
    </location>
</feature>
<feature type="helix" evidence="3">
    <location>
        <begin position="252"/>
        <end position="260"/>
    </location>
</feature>
<feature type="turn" evidence="3">
    <location>
        <begin position="261"/>
        <end position="264"/>
    </location>
</feature>
<feature type="helix" evidence="3">
    <location>
        <begin position="275"/>
        <end position="283"/>
    </location>
</feature>
<feature type="helix" evidence="3">
    <location>
        <begin position="291"/>
        <end position="294"/>
    </location>
</feature>
<feature type="strand" evidence="3">
    <location>
        <begin position="300"/>
        <end position="306"/>
    </location>
</feature>
<feature type="strand" evidence="3">
    <location>
        <begin position="309"/>
        <end position="314"/>
    </location>
</feature>
<feature type="strand" evidence="3">
    <location>
        <begin position="319"/>
        <end position="327"/>
    </location>
</feature>
<feature type="helix" evidence="3">
    <location>
        <begin position="331"/>
        <end position="336"/>
    </location>
</feature>
<feature type="strand" evidence="3">
    <location>
        <begin position="341"/>
        <end position="347"/>
    </location>
</feature>
<feature type="helix" evidence="3">
    <location>
        <begin position="349"/>
        <end position="357"/>
    </location>
</feature>
<feature type="strand" evidence="3">
    <location>
        <begin position="363"/>
        <end position="372"/>
    </location>
</feature>
<feature type="helix" evidence="3">
    <location>
        <begin position="374"/>
        <end position="377"/>
    </location>
</feature>
<feature type="strand" evidence="3">
    <location>
        <begin position="382"/>
        <end position="388"/>
    </location>
</feature>
<feature type="strand" evidence="3">
    <location>
        <begin position="391"/>
        <end position="396"/>
    </location>
</feature>
<feature type="strand" evidence="3">
    <location>
        <begin position="407"/>
        <end position="415"/>
    </location>
</feature>
<feature type="helix" evidence="3">
    <location>
        <begin position="416"/>
        <end position="420"/>
    </location>
</feature>
<feature type="helix" evidence="3">
    <location>
        <begin position="421"/>
        <end position="423"/>
    </location>
</feature>
<feature type="helix" evidence="3">
    <location>
        <begin position="428"/>
        <end position="442"/>
    </location>
</feature>
<feature type="helix" evidence="3">
    <location>
        <begin position="444"/>
        <end position="447"/>
    </location>
</feature>
<feature type="helix" evidence="3">
    <location>
        <begin position="453"/>
        <end position="455"/>
    </location>
</feature>
<feature type="turn" evidence="3">
    <location>
        <begin position="457"/>
        <end position="459"/>
    </location>
</feature>
<feature type="strand" evidence="3">
    <location>
        <begin position="460"/>
        <end position="466"/>
    </location>
</feature>
<feature type="turn" evidence="3">
    <location>
        <begin position="470"/>
        <end position="472"/>
    </location>
</feature>
<feature type="strand" evidence="3">
    <location>
        <begin position="473"/>
        <end position="475"/>
    </location>
</feature>
<feature type="helix" evidence="3">
    <location>
        <begin position="484"/>
        <end position="491"/>
    </location>
</feature>
<feature type="helix" evidence="3">
    <location>
        <begin position="493"/>
        <end position="498"/>
    </location>
</feature>
<feature type="turn" evidence="3">
    <location>
        <begin position="500"/>
        <end position="502"/>
    </location>
</feature>
<feature type="strand" evidence="3">
    <location>
        <begin position="505"/>
        <end position="508"/>
    </location>
</feature>
<feature type="helix" evidence="3">
    <location>
        <begin position="511"/>
        <end position="513"/>
    </location>
</feature>
<feature type="strand" evidence="3">
    <location>
        <begin position="514"/>
        <end position="516"/>
    </location>
</feature>
<feature type="helix" evidence="3">
    <location>
        <begin position="520"/>
        <end position="537"/>
    </location>
</feature>
<feature type="helix" evidence="3">
    <location>
        <begin position="547"/>
        <end position="550"/>
    </location>
</feature>
<protein>
    <recommendedName>
        <fullName>Tryptophan 2-monooxygenase</fullName>
        <ecNumber>1.13.12.3</ecNumber>
    </recommendedName>
</protein>